<reference key="1">
    <citation type="journal article" date="2011" name="Appl. Environ. Microbiol.">
        <title>Genomic potential of Marinobacter aquaeolei, a biogeochemical 'opportunitroph'.</title>
        <authorList>
            <person name="Singer E."/>
            <person name="Webb E.A."/>
            <person name="Nelson W.C."/>
            <person name="Heidelberg J.F."/>
            <person name="Ivanova N."/>
            <person name="Pati A."/>
            <person name="Edwards K.J."/>
        </authorList>
    </citation>
    <scope>NUCLEOTIDE SEQUENCE [LARGE SCALE GENOMIC DNA]</scope>
    <source>
        <strain>ATCC 700491 / DSM 11845 / VT8</strain>
    </source>
</reference>
<organism>
    <name type="scientific">Marinobacter nauticus (strain ATCC 700491 / DSM 11845 / VT8)</name>
    <name type="common">Marinobacter aquaeolei</name>
    <dbReference type="NCBI Taxonomy" id="351348"/>
    <lineage>
        <taxon>Bacteria</taxon>
        <taxon>Pseudomonadati</taxon>
        <taxon>Pseudomonadota</taxon>
        <taxon>Gammaproteobacteria</taxon>
        <taxon>Pseudomonadales</taxon>
        <taxon>Marinobacteraceae</taxon>
        <taxon>Marinobacter</taxon>
    </lineage>
</organism>
<feature type="chain" id="PRO_1000053249" description="ATP synthase gamma chain">
    <location>
        <begin position="1"/>
        <end position="287"/>
    </location>
</feature>
<keyword id="KW-0066">ATP synthesis</keyword>
<keyword id="KW-0997">Cell inner membrane</keyword>
<keyword id="KW-1003">Cell membrane</keyword>
<keyword id="KW-0139">CF(1)</keyword>
<keyword id="KW-0375">Hydrogen ion transport</keyword>
<keyword id="KW-0406">Ion transport</keyword>
<keyword id="KW-0472">Membrane</keyword>
<keyword id="KW-0813">Transport</keyword>
<protein>
    <recommendedName>
        <fullName evidence="1">ATP synthase gamma chain</fullName>
    </recommendedName>
    <alternativeName>
        <fullName evidence="1">ATP synthase F1 sector gamma subunit</fullName>
    </alternativeName>
    <alternativeName>
        <fullName evidence="1">F-ATPase gamma subunit</fullName>
    </alternativeName>
</protein>
<accession>A1U7H5</accession>
<proteinExistence type="inferred from homology"/>
<dbReference type="EMBL" id="CP000514">
    <property type="protein sequence ID" value="ABM20944.1"/>
    <property type="molecule type" value="Genomic_DNA"/>
</dbReference>
<dbReference type="RefSeq" id="WP_011787277.1">
    <property type="nucleotide sequence ID" value="NC_008740.1"/>
</dbReference>
<dbReference type="SMR" id="A1U7H5"/>
<dbReference type="STRING" id="351348.Maqu_3876"/>
<dbReference type="GeneID" id="31823148"/>
<dbReference type="KEGG" id="maq:Maqu_3876"/>
<dbReference type="eggNOG" id="COG0224">
    <property type="taxonomic scope" value="Bacteria"/>
</dbReference>
<dbReference type="HOGENOM" id="CLU_050669_0_1_6"/>
<dbReference type="OrthoDB" id="9812769at2"/>
<dbReference type="Proteomes" id="UP000000998">
    <property type="component" value="Chromosome"/>
</dbReference>
<dbReference type="GO" id="GO:0005886">
    <property type="term" value="C:plasma membrane"/>
    <property type="evidence" value="ECO:0007669"/>
    <property type="project" value="UniProtKB-SubCell"/>
</dbReference>
<dbReference type="GO" id="GO:0045259">
    <property type="term" value="C:proton-transporting ATP synthase complex"/>
    <property type="evidence" value="ECO:0007669"/>
    <property type="project" value="UniProtKB-KW"/>
</dbReference>
<dbReference type="GO" id="GO:0005524">
    <property type="term" value="F:ATP binding"/>
    <property type="evidence" value="ECO:0007669"/>
    <property type="project" value="UniProtKB-UniRule"/>
</dbReference>
<dbReference type="GO" id="GO:0046933">
    <property type="term" value="F:proton-transporting ATP synthase activity, rotational mechanism"/>
    <property type="evidence" value="ECO:0007669"/>
    <property type="project" value="UniProtKB-UniRule"/>
</dbReference>
<dbReference type="GO" id="GO:0042777">
    <property type="term" value="P:proton motive force-driven plasma membrane ATP synthesis"/>
    <property type="evidence" value="ECO:0007669"/>
    <property type="project" value="UniProtKB-UniRule"/>
</dbReference>
<dbReference type="CDD" id="cd12151">
    <property type="entry name" value="F1-ATPase_gamma"/>
    <property type="match status" value="1"/>
</dbReference>
<dbReference type="FunFam" id="1.10.287.80:FF:000005">
    <property type="entry name" value="ATP synthase gamma chain"/>
    <property type="match status" value="1"/>
</dbReference>
<dbReference type="FunFam" id="3.40.1380.10:FF:000006">
    <property type="entry name" value="ATP synthase gamma chain"/>
    <property type="match status" value="1"/>
</dbReference>
<dbReference type="Gene3D" id="3.40.1380.10">
    <property type="match status" value="1"/>
</dbReference>
<dbReference type="Gene3D" id="1.10.287.80">
    <property type="entry name" value="ATP synthase, gamma subunit, helix hairpin domain"/>
    <property type="match status" value="2"/>
</dbReference>
<dbReference type="HAMAP" id="MF_00815">
    <property type="entry name" value="ATP_synth_gamma_bact"/>
    <property type="match status" value="1"/>
</dbReference>
<dbReference type="InterPro" id="IPR035968">
    <property type="entry name" value="ATP_synth_F1_ATPase_gsu"/>
</dbReference>
<dbReference type="InterPro" id="IPR000131">
    <property type="entry name" value="ATP_synth_F1_gsu"/>
</dbReference>
<dbReference type="InterPro" id="IPR023632">
    <property type="entry name" value="ATP_synth_F1_gsu_CS"/>
</dbReference>
<dbReference type="NCBIfam" id="TIGR01146">
    <property type="entry name" value="ATPsyn_F1gamma"/>
    <property type="match status" value="1"/>
</dbReference>
<dbReference type="NCBIfam" id="NF004144">
    <property type="entry name" value="PRK05621.1-1"/>
    <property type="match status" value="1"/>
</dbReference>
<dbReference type="PANTHER" id="PTHR11693">
    <property type="entry name" value="ATP SYNTHASE GAMMA CHAIN"/>
    <property type="match status" value="1"/>
</dbReference>
<dbReference type="PANTHER" id="PTHR11693:SF22">
    <property type="entry name" value="ATP SYNTHASE SUBUNIT GAMMA, MITOCHONDRIAL"/>
    <property type="match status" value="1"/>
</dbReference>
<dbReference type="Pfam" id="PF00231">
    <property type="entry name" value="ATP-synt"/>
    <property type="match status" value="1"/>
</dbReference>
<dbReference type="PRINTS" id="PR00126">
    <property type="entry name" value="ATPASEGAMMA"/>
</dbReference>
<dbReference type="SUPFAM" id="SSF52943">
    <property type="entry name" value="ATP synthase (F1-ATPase), gamma subunit"/>
    <property type="match status" value="1"/>
</dbReference>
<dbReference type="PROSITE" id="PS00153">
    <property type="entry name" value="ATPASE_GAMMA"/>
    <property type="match status" value="1"/>
</dbReference>
<comment type="function">
    <text evidence="1">Produces ATP from ADP in the presence of a proton gradient across the membrane. The gamma chain is believed to be important in regulating ATPase activity and the flow of protons through the CF(0) complex.</text>
</comment>
<comment type="subunit">
    <text evidence="1">F-type ATPases have 2 components, CF(1) - the catalytic core - and CF(0) - the membrane proton channel. CF(1) has five subunits: alpha(3), beta(3), gamma(1), delta(1), epsilon(1). CF(0) has three main subunits: a, b and c.</text>
</comment>
<comment type="subcellular location">
    <subcellularLocation>
        <location evidence="1">Cell inner membrane</location>
        <topology evidence="1">Peripheral membrane protein</topology>
    </subcellularLocation>
</comment>
<comment type="similarity">
    <text evidence="1">Belongs to the ATPase gamma chain family.</text>
</comment>
<sequence length="287" mass="31809">MAVGKEIRNQIGSIKSTQKITSAMEMVAASKMRKAQERMQATRPYAEKMRQVIGHIAKSNKDYRHPFMQEREVKRVGYIVVSSDRGLCGGLNTNAFKLLVREMREWKQQGIETDICAIGQKGASFFRNYGGNVVAAVTHLGDSPSADQLIGSVKVMLDSFVEGKIDRLFLISNEFVNTMTQSPKALQLLPLPEGDDEEIGHQWDYIYEPDSRPILDGLMPRYIESQVYQGVVENLACEQAARMIAMKSATDNAGSIIDELQLAYNKARQAAITQEISEIVSGAASVG</sequence>
<gene>
    <name evidence="1" type="primary">atpG</name>
    <name type="ordered locus">Maqu_3876</name>
</gene>
<evidence type="ECO:0000255" key="1">
    <source>
        <dbReference type="HAMAP-Rule" id="MF_00815"/>
    </source>
</evidence>
<name>ATPG_MARN8</name>